<reference key="1">
    <citation type="submission" date="2006-12" db="EMBL/GenBank/DDBJ databases">
        <authorList>
            <person name="Fouts D.E."/>
            <person name="Nelson K.E."/>
            <person name="Sebastian Y."/>
        </authorList>
    </citation>
    <scope>NUCLEOTIDE SEQUENCE [LARGE SCALE GENOMIC DNA]</scope>
    <source>
        <strain>81-176</strain>
    </source>
</reference>
<accession>A1W0G0</accession>
<keyword id="KW-0997">Cell inner membrane</keyword>
<keyword id="KW-1003">Cell membrane</keyword>
<keyword id="KW-0472">Membrane</keyword>
<keyword id="KW-0653">Protein transport</keyword>
<keyword id="KW-0811">Translocation</keyword>
<keyword id="KW-0812">Transmembrane</keyword>
<keyword id="KW-1133">Transmembrane helix</keyword>
<keyword id="KW-0813">Transport</keyword>
<evidence type="ECO:0000255" key="1">
    <source>
        <dbReference type="HAMAP-Rule" id="MF_00236"/>
    </source>
</evidence>
<evidence type="ECO:0000256" key="2">
    <source>
        <dbReference type="SAM" id="MobiDB-lite"/>
    </source>
</evidence>
<feature type="chain" id="PRO_1000044377" description="Sec-independent protein translocase protein TatA">
    <location>
        <begin position="1"/>
        <end position="79"/>
    </location>
</feature>
<feature type="transmembrane region" description="Helical" evidence="1">
    <location>
        <begin position="1"/>
        <end position="21"/>
    </location>
</feature>
<feature type="region of interest" description="Disordered" evidence="2">
    <location>
        <begin position="49"/>
        <end position="79"/>
    </location>
</feature>
<feature type="compositionally biased region" description="Basic and acidic residues" evidence="2">
    <location>
        <begin position="49"/>
        <end position="61"/>
    </location>
</feature>
<dbReference type="EMBL" id="CP000538">
    <property type="protein sequence ID" value="EAQ72120.1"/>
    <property type="molecule type" value="Genomic_DNA"/>
</dbReference>
<dbReference type="RefSeq" id="WP_002852866.1">
    <property type="nucleotide sequence ID" value="NC_008787.1"/>
</dbReference>
<dbReference type="SMR" id="A1W0G0"/>
<dbReference type="KEGG" id="cjj:CJJ81176_1191"/>
<dbReference type="eggNOG" id="COG1826">
    <property type="taxonomic scope" value="Bacteria"/>
</dbReference>
<dbReference type="HOGENOM" id="CLU_086034_5_4_7"/>
<dbReference type="Proteomes" id="UP000000646">
    <property type="component" value="Chromosome"/>
</dbReference>
<dbReference type="GO" id="GO:0033281">
    <property type="term" value="C:TAT protein transport complex"/>
    <property type="evidence" value="ECO:0007669"/>
    <property type="project" value="UniProtKB-UniRule"/>
</dbReference>
<dbReference type="GO" id="GO:0008320">
    <property type="term" value="F:protein transmembrane transporter activity"/>
    <property type="evidence" value="ECO:0007669"/>
    <property type="project" value="UniProtKB-UniRule"/>
</dbReference>
<dbReference type="GO" id="GO:0043953">
    <property type="term" value="P:protein transport by the Tat complex"/>
    <property type="evidence" value="ECO:0007669"/>
    <property type="project" value="UniProtKB-UniRule"/>
</dbReference>
<dbReference type="Gene3D" id="1.20.5.3310">
    <property type="match status" value="1"/>
</dbReference>
<dbReference type="HAMAP" id="MF_00236">
    <property type="entry name" value="TatA_E"/>
    <property type="match status" value="1"/>
</dbReference>
<dbReference type="InterPro" id="IPR003369">
    <property type="entry name" value="TatA/B/E"/>
</dbReference>
<dbReference type="InterPro" id="IPR006312">
    <property type="entry name" value="TatA/E"/>
</dbReference>
<dbReference type="NCBIfam" id="TIGR01411">
    <property type="entry name" value="tatAE"/>
    <property type="match status" value="1"/>
</dbReference>
<dbReference type="PANTHER" id="PTHR42982">
    <property type="entry name" value="SEC-INDEPENDENT PROTEIN TRANSLOCASE PROTEIN TATA"/>
    <property type="match status" value="1"/>
</dbReference>
<dbReference type="PANTHER" id="PTHR42982:SF1">
    <property type="entry name" value="SEC-INDEPENDENT PROTEIN TRANSLOCASE PROTEIN TATA"/>
    <property type="match status" value="1"/>
</dbReference>
<dbReference type="Pfam" id="PF02416">
    <property type="entry name" value="TatA_B_E"/>
    <property type="match status" value="1"/>
</dbReference>
<comment type="function">
    <text evidence="1">Part of the twin-arginine translocation (Tat) system that transports large folded proteins containing a characteristic twin-arginine motif in their signal peptide across membranes. TatA could form the protein-conducting channel of the Tat system.</text>
</comment>
<comment type="subunit">
    <text evidence="1">The Tat system comprises two distinct complexes: a TatABC complex, containing multiple copies of TatA, TatB and TatC subunits, and a separate TatA complex, containing only TatA subunits. Substrates initially bind to the TatABC complex, which probably triggers association of the separate TatA complex to form the active translocon.</text>
</comment>
<comment type="subcellular location">
    <subcellularLocation>
        <location evidence="1">Cell inner membrane</location>
        <topology evidence="1">Single-pass membrane protein</topology>
    </subcellularLocation>
</comment>
<comment type="similarity">
    <text evidence="1">Belongs to the TatA/E family.</text>
</comment>
<name>TATA_CAMJJ</name>
<protein>
    <recommendedName>
        <fullName evidence="1">Sec-independent protein translocase protein TatA</fullName>
    </recommendedName>
</protein>
<sequence length="79" mass="8685">MGGWSSPSHWLIILLIVVLLFGAKKIPELAKGLGKGIKTFKDEMNNDDEVAKNTQKIEENKNTTNNTNADASIDETKKA</sequence>
<proteinExistence type="inferred from homology"/>
<gene>
    <name evidence="1" type="primary">tatA</name>
    <name type="ordered locus">CJJ81176_1191</name>
</gene>
<organism>
    <name type="scientific">Campylobacter jejuni subsp. jejuni serotype O:23/36 (strain 81-176)</name>
    <dbReference type="NCBI Taxonomy" id="354242"/>
    <lineage>
        <taxon>Bacteria</taxon>
        <taxon>Pseudomonadati</taxon>
        <taxon>Campylobacterota</taxon>
        <taxon>Epsilonproteobacteria</taxon>
        <taxon>Campylobacterales</taxon>
        <taxon>Campylobacteraceae</taxon>
        <taxon>Campylobacter</taxon>
    </lineage>
</organism>